<proteinExistence type="evidence at protein level"/>
<evidence type="ECO:0000255" key="1">
    <source>
        <dbReference type="PROSITE-ProRule" id="PRU01313"/>
    </source>
</evidence>
<evidence type="ECO:0000256" key="2">
    <source>
        <dbReference type="SAM" id="MobiDB-lite"/>
    </source>
</evidence>
<evidence type="ECO:0000269" key="3">
    <source>
    </source>
</evidence>
<evidence type="ECO:0000269" key="4">
    <source>
    </source>
</evidence>
<evidence type="ECO:0000269" key="5">
    <source>
    </source>
</evidence>
<evidence type="ECO:0000303" key="6">
    <source>
    </source>
</evidence>
<evidence type="ECO:0000303" key="7">
    <source>
    </source>
</evidence>
<evidence type="ECO:0000303" key="8">
    <source>
    </source>
</evidence>
<evidence type="ECO:0000303" key="9">
    <source ref="5"/>
</evidence>
<evidence type="ECO:0000305" key="10"/>
<evidence type="ECO:0000312" key="11">
    <source>
        <dbReference type="FlyBase" id="FBgn0259211"/>
    </source>
</evidence>
<protein>
    <recommendedName>
        <fullName>Protein grainyhead</fullName>
    </recommendedName>
    <alternativeName>
        <fullName>DNA-binding protein ELF-1</fullName>
    </alternativeName>
    <alternativeName>
        <fullName>Element I-binding activity</fullName>
    </alternativeName>
    <alternativeName>
        <fullName>Protein grainy-head</fullName>
    </alternativeName>
    <alternativeName>
        <fullName>Transcription factor NTF-1</fullName>
    </alternativeName>
</protein>
<keyword id="KW-0025">Alternative splicing</keyword>
<keyword id="KW-0238">DNA-binding</keyword>
<keyword id="KW-0539">Nucleus</keyword>
<keyword id="KW-1185">Reference proteome</keyword>
<keyword id="KW-0804">Transcription</keyword>
<keyword id="KW-0805">Transcription regulation</keyword>
<comment type="function">
    <text evidence="3 4 5">Transcription factor that binds a CNS-specific regulatory element of the Dopa decarboxylase (Ddc) gene. Also interacts with sequences adjacent to other transcription units, including Ultrabithorax (Ubx) and engrailed (en). Activity in vivo may be required only at high levels transiently to activate the expression of Ddc in the CNS.</text>
</comment>
<comment type="interaction">
    <interactant intactId="EBI-497032">
        <id>P13002</id>
    </interactant>
    <interactant intactId="EBI-869024">
        <id>Q94527</id>
        <label>Rel</label>
    </interactant>
    <organismsDiffer>false</organismsDiffer>
    <experiments>3</experiments>
</comment>
<comment type="subcellular location">
    <subcellularLocation>
        <location evidence="3 5">Nucleus</location>
    </subcellularLocation>
</comment>
<comment type="alternative products">
    <event type="alternative splicing"/>
    <isoform>
        <id>P13002-6</id>
        <name evidence="11">J</name>
        <sequence type="displayed"/>
    </isoform>
    <isoform>
        <id>P13002-1</id>
        <name>I</name>
        <name evidence="11">A</name>
        <sequence type="described" ref="VSP_008611"/>
    </isoform>
    <isoform>
        <id>P13002-2</id>
        <name evidence="11">H</name>
        <sequence type="described" ref="VSP_008611 VSP_008612"/>
    </isoform>
    <isoform>
        <id>P13002-3</id>
        <name evidence="11">L</name>
        <sequence type="described" ref="VSP_008612"/>
    </isoform>
    <isoform>
        <id>P13002-5</id>
        <name evidence="11">O</name>
        <sequence type="described" ref="VSP_008609 VSP_008612"/>
    </isoform>
    <isoform>
        <id>P13002-4</id>
        <name evidence="11">N</name>
        <sequence type="described" ref="VSP_008609"/>
    </isoform>
    <isoform>
        <id>P13002-8</id>
        <name evidence="11">K</name>
        <sequence type="described" ref="VSP_058160 VSP_008611"/>
    </isoform>
    <text>Additional isoforms seem to exist.</text>
</comment>
<comment type="tissue specificity">
    <text evidence="5">Restricted, during embryogenesis, to tissues derived from ectoderm, predominantly the central nervous system (CNS) and the epidermis.</text>
</comment>
<comment type="similarity">
    <text evidence="10">Belongs to the grh/CP2 family. Grainyhead subfamily.</text>
</comment>
<gene>
    <name type="primary">grh</name>
    <name type="synonym">elf1</name>
    <name type="ORF">CG5058</name>
</gene>
<organism>
    <name type="scientific">Drosophila melanogaster</name>
    <name type="common">Fruit fly</name>
    <dbReference type="NCBI Taxonomy" id="7227"/>
    <lineage>
        <taxon>Eukaryota</taxon>
        <taxon>Metazoa</taxon>
        <taxon>Ecdysozoa</taxon>
        <taxon>Arthropoda</taxon>
        <taxon>Hexapoda</taxon>
        <taxon>Insecta</taxon>
        <taxon>Pterygota</taxon>
        <taxon>Neoptera</taxon>
        <taxon>Endopterygota</taxon>
        <taxon>Diptera</taxon>
        <taxon>Brachycera</taxon>
        <taxon>Muscomorpha</taxon>
        <taxon>Ephydroidea</taxon>
        <taxon>Drosophilidae</taxon>
        <taxon>Drosophila</taxon>
        <taxon>Sophophora</taxon>
    </lineage>
</organism>
<feature type="chain" id="PRO_0000086952" description="Protein grainyhead">
    <location>
        <begin position="1"/>
        <end position="1333"/>
    </location>
</feature>
<feature type="domain" description="Grh/CP2 DB" evidence="1">
    <location>
        <begin position="899"/>
        <end position="1125"/>
    </location>
</feature>
<feature type="region of interest" description="Disordered" evidence="2">
    <location>
        <begin position="52"/>
        <end position="93"/>
    </location>
</feature>
<feature type="region of interest" description="Disordered" evidence="2">
    <location>
        <begin position="439"/>
        <end position="598"/>
    </location>
</feature>
<feature type="region of interest" description="Disordered" evidence="2">
    <location>
        <begin position="617"/>
        <end position="655"/>
    </location>
</feature>
<feature type="region of interest" description="Disordered" evidence="2">
    <location>
        <begin position="727"/>
        <end position="784"/>
    </location>
</feature>
<feature type="region of interest" description="Disordered" evidence="2">
    <location>
        <begin position="853"/>
        <end position="885"/>
    </location>
</feature>
<feature type="compositionally biased region" description="Gly residues" evidence="2">
    <location>
        <begin position="59"/>
        <end position="68"/>
    </location>
</feature>
<feature type="compositionally biased region" description="Low complexity" evidence="2">
    <location>
        <begin position="445"/>
        <end position="488"/>
    </location>
</feature>
<feature type="compositionally biased region" description="Basic and acidic residues" evidence="2">
    <location>
        <begin position="520"/>
        <end position="532"/>
    </location>
</feature>
<feature type="compositionally biased region" description="Low complexity" evidence="2">
    <location>
        <begin position="533"/>
        <end position="546"/>
    </location>
</feature>
<feature type="compositionally biased region" description="Low complexity" evidence="2">
    <location>
        <begin position="567"/>
        <end position="596"/>
    </location>
</feature>
<feature type="compositionally biased region" description="Gly residues" evidence="2">
    <location>
        <begin position="626"/>
        <end position="642"/>
    </location>
</feature>
<feature type="compositionally biased region" description="Low complexity" evidence="2">
    <location>
        <begin position="749"/>
        <end position="772"/>
    </location>
</feature>
<feature type="compositionally biased region" description="Polar residues" evidence="2">
    <location>
        <begin position="853"/>
        <end position="877"/>
    </location>
</feature>
<feature type="splice variant" id="VSP_008609" description="In isoform O and isoform N." evidence="6">
    <location>
        <begin position="1"/>
        <end position="604"/>
    </location>
</feature>
<feature type="splice variant" id="VSP_058160" description="In isoform K." evidence="10">
    <original>STSTATTSVITSNELSLSGHAHGHGHAHQLHQHTHSRLGVGVGVGILSDASLSPIQQGSGGHSGGGNTNSSPLAPNGVPLLTTMHRSPDSPQPELATMTNVNVLDLHTDNSKLYDKEAVFIYETPKVVMPADGGGGNNSDEGHAIDARIAAQMGNQAQQQQQQQQQTEHQPLAKIEFDENQIIRVVGPNGEQQQIISREIINGEHHILSRNEAGEHILTRIVSDPSKLMPNDNAVATAMYNQAQKMNNDHGQAVYQTSPLPLDASVLHYSGGNDSNVIKTEADIYEDHKKHAAAAAAAAGGGSIIYTTSDPNGVNVKQLPHLTVPQKLDPDLYQADKHIDLIYNDGSKTVIYSTTDQKSLEIYSGGDIGSLVSDGQVVVQAGLPYATTTGAGGQPVYIVADGALPAGVEEHLQ</original>
    <variation>QEATSTTNYALSYTDWMSEPRRGFSLDSLHAGHVESDPQQQQHHQQLLHHYYSPGDQVKDQGLVLPLNHQQDHHGHHLTAAGLMQAVAAEIQLNEDQDQLHPNANQNSPYPIYSYYRSEGERANNGSPGADLPW</variation>
    <location>
        <begin position="2"/>
        <end position="414"/>
    </location>
</feature>
<feature type="splice variant" id="VSP_008611" description="In isoform H, isoform I and isoform K." evidence="7 8 9">
    <location>
        <begin position="553"/>
        <end position="822"/>
    </location>
</feature>
<feature type="splice variant" id="VSP_008612" description="In isoform H, isoform L and isoform O." evidence="6 9">
    <location>
        <begin position="1133"/>
        <end position="1163"/>
    </location>
</feature>
<feature type="sequence conflict" description="In Ref. 1; CAA33692." evidence="10" ref="1">
    <original>P</original>
    <variation>R</variation>
    <location>
        <position position="262"/>
    </location>
</feature>
<feature type="sequence conflict" description="In Ref. 6; CAA22954." evidence="10" ref="6">
    <original>S</original>
    <variation>R</variation>
    <location>
        <position position="415"/>
    </location>
</feature>
<feature type="sequence conflict" description="In Ref. 5; AAR99118." evidence="10" ref="5">
    <original>I</original>
    <variation>V</variation>
    <location>
        <position position="504"/>
    </location>
</feature>
<feature type="sequence conflict" description="In Ref. 4; AAK93490." evidence="10" ref="4">
    <original>G</original>
    <variation>C</variation>
    <location>
        <position position="610"/>
    </location>
</feature>
<feature type="sequence conflict" description="In Ref. 5; AAR99118." evidence="10" ref="5">
    <original>K</original>
    <variation>R</variation>
    <location>
        <position position="969"/>
    </location>
</feature>
<feature type="sequence conflict" description="In Ref. 1; CAA33692." evidence="10" ref="1">
    <original>C</original>
    <variation>V</variation>
    <location>
        <position position="999"/>
    </location>
</feature>
<feature type="sequence conflict" description="In Ref. 1; CAA33692." evidence="10" ref="1">
    <original>NA</original>
    <variation>KS</variation>
    <location>
        <begin position="1006"/>
        <end position="1007"/>
    </location>
</feature>
<feature type="sequence conflict" description="In Ref. 5; AAR99118." evidence="10" ref="5">
    <original>K</original>
    <variation>E</variation>
    <location>
        <position position="1089"/>
    </location>
</feature>
<feature type="sequence conflict" description="In Ref. 4; AAK93490." evidence="10" ref="4">
    <original>R</original>
    <variation>S</variation>
    <location>
        <position position="1233"/>
    </location>
</feature>
<feature type="sequence conflict" description="In Ref. 4; AAO24937." evidence="10" ref="4">
    <original>L</original>
    <variation>R</variation>
    <location>
        <position position="1322"/>
    </location>
</feature>
<accession>P13002</accession>
<accession>A0JQ61</accession>
<accession>A1ZB05</accession>
<accession>Q6NN37</accession>
<accession>Q86PE1</accession>
<accession>Q8MMA8</accession>
<accession>Q8MMB0</accession>
<accession>Q8MMB1</accession>
<accession>Q960H2</accession>
<accession>Q9TYG4</accession>
<accession>Q9V889</accession>
<accession>Q9V890</accession>
<accession>Q9V891</accession>
<dbReference type="EMBL" id="X15657">
    <property type="protein sequence ID" value="CAA33692.1"/>
    <property type="molecule type" value="mRNA"/>
</dbReference>
<dbReference type="EMBL" id="AE013599">
    <property type="protein sequence ID" value="AAF57782.3"/>
    <property type="molecule type" value="Genomic_DNA"/>
</dbReference>
<dbReference type="EMBL" id="AE013599">
    <property type="protein sequence ID" value="AAF57784.3"/>
    <property type="molecule type" value="Genomic_DNA"/>
</dbReference>
<dbReference type="EMBL" id="AE013599">
    <property type="protein sequence ID" value="AAM68467.2"/>
    <property type="molecule type" value="Genomic_DNA"/>
</dbReference>
<dbReference type="EMBL" id="AE013599">
    <property type="protein sequence ID" value="AAM68468.2"/>
    <property type="molecule type" value="Genomic_DNA"/>
</dbReference>
<dbReference type="EMBL" id="AE013599">
    <property type="protein sequence ID" value="AAM68470.2"/>
    <property type="molecule type" value="Genomic_DNA"/>
</dbReference>
<dbReference type="EMBL" id="AE013599">
    <property type="protein sequence ID" value="AAM68472.2"/>
    <property type="molecule type" value="Genomic_DNA"/>
</dbReference>
<dbReference type="EMBL" id="AY052066">
    <property type="protein sequence ID" value="AAK93490.1"/>
    <property type="molecule type" value="mRNA"/>
</dbReference>
<dbReference type="EMBL" id="BT001414">
    <property type="protein sequence ID" value="AAN71169.1"/>
    <property type="molecule type" value="mRNA"/>
</dbReference>
<dbReference type="EMBL" id="BT003182">
    <property type="protein sequence ID" value="AAO24937.1"/>
    <property type="molecule type" value="mRNA"/>
</dbReference>
<dbReference type="EMBL" id="BT029431">
    <property type="protein sequence ID" value="ABK57088.1"/>
    <property type="molecule type" value="mRNA"/>
</dbReference>
<dbReference type="EMBL" id="AL035312">
    <property type="protein sequence ID" value="CAA22954.1"/>
    <property type="molecule type" value="Genomic_DNA"/>
</dbReference>
<dbReference type="EMBL" id="BT011460">
    <property type="protein sequence ID" value="AAR99118.1"/>
    <property type="molecule type" value="mRNA"/>
</dbReference>
<dbReference type="PIR" id="S06206">
    <property type="entry name" value="S06206"/>
</dbReference>
<dbReference type="RefSeq" id="NP_001246401.1">
    <molecule id="P13002-5"/>
    <property type="nucleotide sequence ID" value="NM_001259472.1"/>
</dbReference>
<dbReference type="RefSeq" id="NP_001286551.1">
    <molecule id="P13002-1"/>
    <property type="nucleotide sequence ID" value="NM_001299622.1"/>
</dbReference>
<dbReference type="RefSeq" id="NP_476842.2">
    <molecule id="P13002-1"/>
    <property type="nucleotide sequence ID" value="NM_057494.4"/>
</dbReference>
<dbReference type="RefSeq" id="NP_476843.2">
    <molecule id="P13002-2"/>
    <property type="nucleotide sequence ID" value="NM_057495.4"/>
</dbReference>
<dbReference type="RefSeq" id="NP_476844.2">
    <molecule id="P13002-3"/>
    <property type="nucleotide sequence ID" value="NM_057496.5"/>
</dbReference>
<dbReference type="RefSeq" id="NP_476845.2">
    <molecule id="P13002-6"/>
    <property type="nucleotide sequence ID" value="NM_057497.4"/>
</dbReference>
<dbReference type="RefSeq" id="NP_725723.2">
    <molecule id="P13002-8"/>
    <property type="nucleotide sequence ID" value="NM_166250.4"/>
</dbReference>
<dbReference type="RefSeq" id="NP_725725.1">
    <molecule id="P13002-4"/>
    <property type="nucleotide sequence ID" value="NM_166252.3"/>
</dbReference>
<dbReference type="SMR" id="P13002"/>
<dbReference type="BioGRID" id="62723">
    <property type="interactions" value="38"/>
</dbReference>
<dbReference type="DIP" id="DIP-59591N"/>
<dbReference type="FunCoup" id="P13002">
    <property type="interactions" value="289"/>
</dbReference>
<dbReference type="IntAct" id="P13002">
    <property type="interactions" value="12"/>
</dbReference>
<dbReference type="STRING" id="7227.FBpp0288984"/>
<dbReference type="PaxDb" id="7227-FBpp0288984"/>
<dbReference type="DNASU" id="37038"/>
<dbReference type="EnsemblMetazoa" id="FBtr0299705">
    <molecule id="P13002-1"/>
    <property type="protein sequence ID" value="FBpp0288983"/>
    <property type="gene ID" value="FBgn0259211"/>
</dbReference>
<dbReference type="EnsemblMetazoa" id="FBtr0299706">
    <molecule id="P13002-6"/>
    <property type="protein sequence ID" value="FBpp0288984"/>
    <property type="gene ID" value="FBgn0259211"/>
</dbReference>
<dbReference type="EnsemblMetazoa" id="FBtr0299707">
    <molecule id="P13002-8"/>
    <property type="protein sequence ID" value="FBpp0288985"/>
    <property type="gene ID" value="FBgn0259211"/>
</dbReference>
<dbReference type="EnsemblMetazoa" id="FBtr0300538">
    <molecule id="P13002-2"/>
    <property type="protein sequence ID" value="FBpp0289765"/>
    <property type="gene ID" value="FBgn0259211"/>
</dbReference>
<dbReference type="EnsemblMetazoa" id="FBtr0300539">
    <molecule id="P13002-3"/>
    <property type="protein sequence ID" value="FBpp0289766"/>
    <property type="gene ID" value="FBgn0259211"/>
</dbReference>
<dbReference type="EnsemblMetazoa" id="FBtr0300541">
    <molecule id="P13002-4"/>
    <property type="protein sequence ID" value="FBpp0289768"/>
    <property type="gene ID" value="FBgn0259211"/>
</dbReference>
<dbReference type="EnsemblMetazoa" id="FBtr0306625">
    <molecule id="P13002-5"/>
    <property type="protein sequence ID" value="FBpp0297580"/>
    <property type="gene ID" value="FBgn0259211"/>
</dbReference>
<dbReference type="EnsemblMetazoa" id="FBtr0345791">
    <molecule id="P13002-1"/>
    <property type="protein sequence ID" value="FBpp0311781"/>
    <property type="gene ID" value="FBgn0259211"/>
</dbReference>
<dbReference type="GeneID" id="37038"/>
<dbReference type="KEGG" id="dme:Dmel_CG42311"/>
<dbReference type="AGR" id="FB:FBgn0259211"/>
<dbReference type="CTD" id="37038"/>
<dbReference type="FlyBase" id="FBgn0259211">
    <property type="gene designation" value="grh"/>
</dbReference>
<dbReference type="VEuPathDB" id="VectorBase:FBgn0259211"/>
<dbReference type="eggNOG" id="KOG4091">
    <property type="taxonomic scope" value="Eukaryota"/>
</dbReference>
<dbReference type="InParanoid" id="P13002"/>
<dbReference type="OMA" id="QGVYQTS"/>
<dbReference type="OrthoDB" id="7680836at2759"/>
<dbReference type="PhylomeDB" id="P13002"/>
<dbReference type="SignaLink" id="P13002"/>
<dbReference type="BioGRID-ORCS" id="37038">
    <property type="hits" value="0 hits in 3 CRISPR screens"/>
</dbReference>
<dbReference type="GenomeRNAi" id="37038"/>
<dbReference type="PRO" id="PR:P13002"/>
<dbReference type="Proteomes" id="UP000000803">
    <property type="component" value="Chromosome 2R"/>
</dbReference>
<dbReference type="Bgee" id="FBgn0259211">
    <property type="expression patterns" value="Expressed in epithelial cell in haltere and 166 other cell types or tissues"/>
</dbReference>
<dbReference type="ExpressionAtlas" id="P13002">
    <property type="expression patterns" value="baseline and differential"/>
</dbReference>
<dbReference type="GO" id="GO:0005634">
    <property type="term" value="C:nucleus"/>
    <property type="evidence" value="ECO:0000314"/>
    <property type="project" value="FlyBase"/>
</dbReference>
<dbReference type="GO" id="GO:0003677">
    <property type="term" value="F:DNA binding"/>
    <property type="evidence" value="ECO:0000314"/>
    <property type="project" value="FlyBase"/>
</dbReference>
<dbReference type="GO" id="GO:0001228">
    <property type="term" value="F:DNA-binding transcription activator activity, RNA polymerase II-specific"/>
    <property type="evidence" value="ECO:0000318"/>
    <property type="project" value="GO_Central"/>
</dbReference>
<dbReference type="GO" id="GO:0003700">
    <property type="term" value="F:DNA-binding transcription factor activity"/>
    <property type="evidence" value="ECO:0000314"/>
    <property type="project" value="FlyBase"/>
</dbReference>
<dbReference type="GO" id="GO:0000981">
    <property type="term" value="F:DNA-binding transcription factor activity, RNA polymerase II-specific"/>
    <property type="evidence" value="ECO:0000314"/>
    <property type="project" value="UniProtKB"/>
</dbReference>
<dbReference type="GO" id="GO:0042803">
    <property type="term" value="F:protein homodimerization activity"/>
    <property type="evidence" value="ECO:0000353"/>
    <property type="project" value="FlyBase"/>
</dbReference>
<dbReference type="GO" id="GO:0000978">
    <property type="term" value="F:RNA polymerase II cis-regulatory region sequence-specific DNA binding"/>
    <property type="evidence" value="ECO:0000318"/>
    <property type="project" value="GO_Central"/>
</dbReference>
<dbReference type="GO" id="GO:0043565">
    <property type="term" value="F:sequence-specific DNA binding"/>
    <property type="evidence" value="ECO:0000314"/>
    <property type="project" value="FlyBase"/>
</dbReference>
<dbReference type="GO" id="GO:0040003">
    <property type="term" value="P:chitin-based cuticle development"/>
    <property type="evidence" value="ECO:0000315"/>
    <property type="project" value="FlyBase"/>
</dbReference>
<dbReference type="GO" id="GO:0008362">
    <property type="term" value="P:chitin-based embryonic cuticle biosynthetic process"/>
    <property type="evidence" value="ECO:0000315"/>
    <property type="project" value="FlyBase"/>
</dbReference>
<dbReference type="GO" id="GO:0003382">
    <property type="term" value="P:epithelial cell morphogenesis"/>
    <property type="evidence" value="ECO:0000315"/>
    <property type="project" value="FlyBase"/>
</dbReference>
<dbReference type="GO" id="GO:0008543">
    <property type="term" value="P:fibroblast growth factor receptor signaling pathway"/>
    <property type="evidence" value="ECO:0000316"/>
    <property type="project" value="FlyBase"/>
</dbReference>
<dbReference type="GO" id="GO:0007402">
    <property type="term" value="P:ganglion mother cell fate determination"/>
    <property type="evidence" value="ECO:0000304"/>
    <property type="project" value="FlyBase"/>
</dbReference>
<dbReference type="GO" id="GO:0061024">
    <property type="term" value="P:membrane organization"/>
    <property type="evidence" value="ECO:0000304"/>
    <property type="project" value="FlyBase"/>
</dbReference>
<dbReference type="GO" id="GO:0007399">
    <property type="term" value="P:nervous system development"/>
    <property type="evidence" value="ECO:0000315"/>
    <property type="project" value="FlyBase"/>
</dbReference>
<dbReference type="GO" id="GO:0007424">
    <property type="term" value="P:open tracheal system development"/>
    <property type="evidence" value="ECO:0000270"/>
    <property type="project" value="FlyBase"/>
</dbReference>
<dbReference type="GO" id="GO:0045944">
    <property type="term" value="P:positive regulation of transcription by RNA polymerase II"/>
    <property type="evidence" value="ECO:0000270"/>
    <property type="project" value="FlyBase"/>
</dbReference>
<dbReference type="GO" id="GO:0007464">
    <property type="term" value="P:R3/R4 cell fate commitment"/>
    <property type="evidence" value="ECO:0000315"/>
    <property type="project" value="FlyBase"/>
</dbReference>
<dbReference type="GO" id="GO:0042127">
    <property type="term" value="P:regulation of cell population proliferation"/>
    <property type="evidence" value="ECO:0000315"/>
    <property type="project" value="FlyBase"/>
</dbReference>
<dbReference type="GO" id="GO:0050767">
    <property type="term" value="P:regulation of neurogenesis"/>
    <property type="evidence" value="ECO:0000315"/>
    <property type="project" value="FlyBase"/>
</dbReference>
<dbReference type="GO" id="GO:0006357">
    <property type="term" value="P:regulation of transcription by RNA polymerase II"/>
    <property type="evidence" value="ECO:0000318"/>
    <property type="project" value="GO_Central"/>
</dbReference>
<dbReference type="GO" id="GO:0035159">
    <property type="term" value="P:regulation of tube length, open tracheal system"/>
    <property type="evidence" value="ECO:0000315"/>
    <property type="project" value="FlyBase"/>
</dbReference>
<dbReference type="GO" id="GO:0061041">
    <property type="term" value="P:regulation of wound healing"/>
    <property type="evidence" value="ECO:0000315"/>
    <property type="project" value="FlyBase"/>
</dbReference>
<dbReference type="GO" id="GO:0042052">
    <property type="term" value="P:rhabdomere development"/>
    <property type="evidence" value="ECO:0000315"/>
    <property type="project" value="FlyBase"/>
</dbReference>
<dbReference type="GO" id="GO:0007426">
    <property type="term" value="P:tracheal outgrowth, open tracheal system"/>
    <property type="evidence" value="ECO:0000315"/>
    <property type="project" value="FlyBase"/>
</dbReference>
<dbReference type="GO" id="GO:0007419">
    <property type="term" value="P:ventral cord development"/>
    <property type="evidence" value="ECO:0007001"/>
    <property type="project" value="FlyBase"/>
</dbReference>
<dbReference type="InterPro" id="IPR007604">
    <property type="entry name" value="CP2"/>
</dbReference>
<dbReference type="InterPro" id="IPR040167">
    <property type="entry name" value="TF_CP2-like"/>
</dbReference>
<dbReference type="PANTHER" id="PTHR11037:SF20">
    <property type="entry name" value="PROTEIN GRAINYHEAD"/>
    <property type="match status" value="1"/>
</dbReference>
<dbReference type="PANTHER" id="PTHR11037">
    <property type="entry name" value="TRANSCRIPTION FACTOR CP2"/>
    <property type="match status" value="1"/>
</dbReference>
<dbReference type="Pfam" id="PF04516">
    <property type="entry name" value="CP2"/>
    <property type="match status" value="1"/>
</dbReference>
<dbReference type="Pfam" id="PF25416">
    <property type="entry name" value="GRHL1_C"/>
    <property type="match status" value="1"/>
</dbReference>
<dbReference type="PROSITE" id="PS51968">
    <property type="entry name" value="GRH_CP2_DB"/>
    <property type="match status" value="1"/>
</dbReference>
<reference key="1">
    <citation type="journal article" date="1989" name="Genes Dev.">
        <title>Embryonic expression pattern of a family of Drosophila proteins that interact with a central nervous system regulatory element.</title>
        <authorList>
            <person name="Bray S.J."/>
            <person name="Burke B."/>
            <person name="Brown N.H."/>
            <person name="Hirsh J."/>
        </authorList>
    </citation>
    <scope>NUCLEOTIDE SEQUENCE [MRNA] (ISOFORM I)</scope>
    <scope>FUNCTION</scope>
    <scope>SUBCELLULAR LOCATION</scope>
    <scope>TISSUE SPECIFICITY</scope>
    <source>
        <strain>Oregon-R</strain>
        <tissue>Embryo</tissue>
    </source>
</reference>
<reference key="2">
    <citation type="journal article" date="2000" name="Science">
        <title>The genome sequence of Drosophila melanogaster.</title>
        <authorList>
            <person name="Adams M.D."/>
            <person name="Celniker S.E."/>
            <person name="Holt R.A."/>
            <person name="Evans C.A."/>
            <person name="Gocayne J.D."/>
            <person name="Amanatides P.G."/>
            <person name="Scherer S.E."/>
            <person name="Li P.W."/>
            <person name="Hoskins R.A."/>
            <person name="Galle R.F."/>
            <person name="George R.A."/>
            <person name="Lewis S.E."/>
            <person name="Richards S."/>
            <person name="Ashburner M."/>
            <person name="Henderson S.N."/>
            <person name="Sutton G.G."/>
            <person name="Wortman J.R."/>
            <person name="Yandell M.D."/>
            <person name="Zhang Q."/>
            <person name="Chen L.X."/>
            <person name="Brandon R.C."/>
            <person name="Rogers Y.-H.C."/>
            <person name="Blazej R.G."/>
            <person name="Champe M."/>
            <person name="Pfeiffer B.D."/>
            <person name="Wan K.H."/>
            <person name="Doyle C."/>
            <person name="Baxter E.G."/>
            <person name="Helt G."/>
            <person name="Nelson C.R."/>
            <person name="Miklos G.L.G."/>
            <person name="Abril J.F."/>
            <person name="Agbayani A."/>
            <person name="An H.-J."/>
            <person name="Andrews-Pfannkoch C."/>
            <person name="Baldwin D."/>
            <person name="Ballew R.M."/>
            <person name="Basu A."/>
            <person name="Baxendale J."/>
            <person name="Bayraktaroglu L."/>
            <person name="Beasley E.M."/>
            <person name="Beeson K.Y."/>
            <person name="Benos P.V."/>
            <person name="Berman B.P."/>
            <person name="Bhandari D."/>
            <person name="Bolshakov S."/>
            <person name="Borkova D."/>
            <person name="Botchan M.R."/>
            <person name="Bouck J."/>
            <person name="Brokstein P."/>
            <person name="Brottier P."/>
            <person name="Burtis K.C."/>
            <person name="Busam D.A."/>
            <person name="Butler H."/>
            <person name="Cadieu E."/>
            <person name="Center A."/>
            <person name="Chandra I."/>
            <person name="Cherry J.M."/>
            <person name="Cawley S."/>
            <person name="Dahlke C."/>
            <person name="Davenport L.B."/>
            <person name="Davies P."/>
            <person name="de Pablos B."/>
            <person name="Delcher A."/>
            <person name="Deng Z."/>
            <person name="Mays A.D."/>
            <person name="Dew I."/>
            <person name="Dietz S.M."/>
            <person name="Dodson K."/>
            <person name="Doup L.E."/>
            <person name="Downes M."/>
            <person name="Dugan-Rocha S."/>
            <person name="Dunkov B.C."/>
            <person name="Dunn P."/>
            <person name="Durbin K.J."/>
            <person name="Evangelista C.C."/>
            <person name="Ferraz C."/>
            <person name="Ferriera S."/>
            <person name="Fleischmann W."/>
            <person name="Fosler C."/>
            <person name="Gabrielian A.E."/>
            <person name="Garg N.S."/>
            <person name="Gelbart W.M."/>
            <person name="Glasser K."/>
            <person name="Glodek A."/>
            <person name="Gong F."/>
            <person name="Gorrell J.H."/>
            <person name="Gu Z."/>
            <person name="Guan P."/>
            <person name="Harris M."/>
            <person name="Harris N.L."/>
            <person name="Harvey D.A."/>
            <person name="Heiman T.J."/>
            <person name="Hernandez J.R."/>
            <person name="Houck J."/>
            <person name="Hostin D."/>
            <person name="Houston K.A."/>
            <person name="Howland T.J."/>
            <person name="Wei M.-H."/>
            <person name="Ibegwam C."/>
            <person name="Jalali M."/>
            <person name="Kalush F."/>
            <person name="Karpen G.H."/>
            <person name="Ke Z."/>
            <person name="Kennison J.A."/>
            <person name="Ketchum K.A."/>
            <person name="Kimmel B.E."/>
            <person name="Kodira C.D."/>
            <person name="Kraft C.L."/>
            <person name="Kravitz S."/>
            <person name="Kulp D."/>
            <person name="Lai Z."/>
            <person name="Lasko P."/>
            <person name="Lei Y."/>
            <person name="Levitsky A.A."/>
            <person name="Li J.H."/>
            <person name="Li Z."/>
            <person name="Liang Y."/>
            <person name="Lin X."/>
            <person name="Liu X."/>
            <person name="Mattei B."/>
            <person name="McIntosh T.C."/>
            <person name="McLeod M.P."/>
            <person name="McPherson D."/>
            <person name="Merkulov G."/>
            <person name="Milshina N.V."/>
            <person name="Mobarry C."/>
            <person name="Morris J."/>
            <person name="Moshrefi A."/>
            <person name="Mount S.M."/>
            <person name="Moy M."/>
            <person name="Murphy B."/>
            <person name="Murphy L."/>
            <person name="Muzny D.M."/>
            <person name="Nelson D.L."/>
            <person name="Nelson D.R."/>
            <person name="Nelson K.A."/>
            <person name="Nixon K."/>
            <person name="Nusskern D.R."/>
            <person name="Pacleb J.M."/>
            <person name="Palazzolo M."/>
            <person name="Pittman G.S."/>
            <person name="Pan S."/>
            <person name="Pollard J."/>
            <person name="Puri V."/>
            <person name="Reese M.G."/>
            <person name="Reinert K."/>
            <person name="Remington K."/>
            <person name="Saunders R.D.C."/>
            <person name="Scheeler F."/>
            <person name="Shen H."/>
            <person name="Shue B.C."/>
            <person name="Siden-Kiamos I."/>
            <person name="Simpson M."/>
            <person name="Skupski M.P."/>
            <person name="Smith T.J."/>
            <person name="Spier E."/>
            <person name="Spradling A.C."/>
            <person name="Stapleton M."/>
            <person name="Strong R."/>
            <person name="Sun E."/>
            <person name="Svirskas R."/>
            <person name="Tector C."/>
            <person name="Turner R."/>
            <person name="Venter E."/>
            <person name="Wang A.H."/>
            <person name="Wang X."/>
            <person name="Wang Z.-Y."/>
            <person name="Wassarman D.A."/>
            <person name="Weinstock G.M."/>
            <person name="Weissenbach J."/>
            <person name="Williams S.M."/>
            <person name="Woodage T."/>
            <person name="Worley K.C."/>
            <person name="Wu D."/>
            <person name="Yang S."/>
            <person name="Yao Q.A."/>
            <person name="Ye J."/>
            <person name="Yeh R.-F."/>
            <person name="Zaveri J.S."/>
            <person name="Zhan M."/>
            <person name="Zhang G."/>
            <person name="Zhao Q."/>
            <person name="Zheng L."/>
            <person name="Zheng X.H."/>
            <person name="Zhong F.N."/>
            <person name="Zhong W."/>
            <person name="Zhou X."/>
            <person name="Zhu S.C."/>
            <person name="Zhu X."/>
            <person name="Smith H.O."/>
            <person name="Gibbs R.A."/>
            <person name="Myers E.W."/>
            <person name="Rubin G.M."/>
            <person name="Venter J.C."/>
        </authorList>
    </citation>
    <scope>NUCLEOTIDE SEQUENCE [LARGE SCALE GENOMIC DNA]</scope>
    <source>
        <strain>Berkeley</strain>
    </source>
</reference>
<reference key="3">
    <citation type="journal article" date="2002" name="Genome Biol.">
        <title>Annotation of the Drosophila melanogaster euchromatic genome: a systematic review.</title>
        <authorList>
            <person name="Misra S."/>
            <person name="Crosby M.A."/>
            <person name="Mungall C.J."/>
            <person name="Matthews B.B."/>
            <person name="Campbell K.S."/>
            <person name="Hradecky P."/>
            <person name="Huang Y."/>
            <person name="Kaminker J.S."/>
            <person name="Millburn G.H."/>
            <person name="Prochnik S.E."/>
            <person name="Smith C.D."/>
            <person name="Tupy J.L."/>
            <person name="Whitfield E.J."/>
            <person name="Bayraktaroglu L."/>
            <person name="Berman B.P."/>
            <person name="Bettencourt B.R."/>
            <person name="Celniker S.E."/>
            <person name="de Grey A.D.N.J."/>
            <person name="Drysdale R.A."/>
            <person name="Harris N.L."/>
            <person name="Richter J."/>
            <person name="Russo S."/>
            <person name="Schroeder A.J."/>
            <person name="Shu S.Q."/>
            <person name="Stapleton M."/>
            <person name="Yamada C."/>
            <person name="Ashburner M."/>
            <person name="Gelbart W.M."/>
            <person name="Rubin G.M."/>
            <person name="Lewis S.E."/>
        </authorList>
    </citation>
    <scope>GENOME REANNOTATION</scope>
    <source>
        <strain>Berkeley</strain>
    </source>
</reference>
<reference key="4">
    <citation type="journal article" date="2002" name="Genome Biol.">
        <title>A Drosophila full-length cDNA resource.</title>
        <authorList>
            <person name="Stapleton M."/>
            <person name="Carlson J.W."/>
            <person name="Brokstein P."/>
            <person name="Yu C."/>
            <person name="Champe M."/>
            <person name="George R.A."/>
            <person name="Guarin H."/>
            <person name="Kronmiller B."/>
            <person name="Pacleb J.M."/>
            <person name="Park S."/>
            <person name="Wan K.H."/>
            <person name="Rubin G.M."/>
            <person name="Celniker S.E."/>
        </authorList>
    </citation>
    <scope>NUCLEOTIDE SEQUENCE [LARGE SCALE MRNA] (ISOFORM N)</scope>
    <source>
        <strain>Berkeley</strain>
        <tissue>Head</tissue>
        <tissue>Larva</tissue>
        <tissue>Pupae</tissue>
    </source>
</reference>
<reference key="5">
    <citation type="submission" date="2006-11" db="EMBL/GenBank/DDBJ databases">
        <authorList>
            <person name="Stapleton M."/>
            <person name="Carlson J.W."/>
            <person name="Frise E."/>
            <person name="Kapadia B."/>
            <person name="Park S."/>
            <person name="Wan K.H."/>
            <person name="Yu C."/>
            <person name="Celniker S.E."/>
        </authorList>
    </citation>
    <scope>NUCLEOTIDE SEQUENCE [LARGE SCALE MRNA] (ISOFORMS H; K AND O)</scope>
    <source>
        <strain>Berkeley</strain>
        <tissue>Embryo</tissue>
    </source>
</reference>
<reference key="6">
    <citation type="journal article" date="2000" name="Science">
        <title>From sequence to chromosome: the tip of the X chromosome of D. melanogaster.</title>
        <authorList>
            <person name="Benos P.V."/>
            <person name="Gatt M.K."/>
            <person name="Ashburner M."/>
            <person name="Murphy L."/>
            <person name="Harris D."/>
            <person name="Barrell B.G."/>
            <person name="Ferraz C."/>
            <person name="Vidal S."/>
            <person name="Brun C."/>
            <person name="Demailles J."/>
            <person name="Cadieu E."/>
            <person name="Dreano S."/>
            <person name="Gloux S."/>
            <person name="Lelaure V."/>
            <person name="Mottier S."/>
            <person name="Galibert F."/>
            <person name="Borkova D."/>
            <person name="Minana B."/>
            <person name="Kafatos F.C."/>
            <person name="Louis C."/>
            <person name="Siden-Kiamos I."/>
            <person name="Bolshakov S."/>
            <person name="Papagiannakis G."/>
            <person name="Spanos L."/>
            <person name="Cox S."/>
            <person name="Madueno E."/>
            <person name="de Pablos B."/>
            <person name="Modolell J."/>
            <person name="Peter A."/>
            <person name="Schoettler P."/>
            <person name="Werner M."/>
            <person name="Mourkioti F."/>
            <person name="Beinert N."/>
            <person name="Dowe G."/>
            <person name="Schaefer U."/>
            <person name="Jaeckle H."/>
            <person name="Bucheton A."/>
            <person name="Callister D.M."/>
            <person name="Campbell L.A."/>
            <person name="Darlamitsou A."/>
            <person name="Henderson N.S."/>
            <person name="McMillan P.J."/>
            <person name="Salles C."/>
            <person name="Tait E.A."/>
            <person name="Valenti P."/>
            <person name="Saunders R.D.C."/>
            <person name="Glover D.M."/>
        </authorList>
    </citation>
    <scope>NUCLEOTIDE SEQUENCE [LARGE SCALE GENOMIC DNA] OF 1-415</scope>
    <source>
        <strain>Oregon-R</strain>
    </source>
</reference>
<reference key="7">
    <citation type="journal article" date="1989" name="Genes Dev.">
        <title>Functional analysis of NTF-1, a developmentally regulated Drosophila transcription factor that binds neuronal cis elements.</title>
        <authorList>
            <person name="Dynlacht B.D."/>
            <person name="Attardi L.D."/>
            <person name="Admon A."/>
            <person name="Freeman M."/>
            <person name="Tjian R."/>
        </authorList>
    </citation>
    <scope>NUCLEOTIDE SEQUENCE [MRNA] OF 198-1333 (ISOFORM I)</scope>
    <scope>FUNCTION</scope>
    <source>
        <tissue>Embryo</tissue>
    </source>
</reference>
<reference key="8">
    <citation type="journal article" date="2010" name="Dev. Biol.">
        <title>Grainyhead and Zelda compete for binding to the promoters of the earliest-expressed Drosophila genes.</title>
        <authorList>
            <person name="Harrison M.M."/>
            <person name="Botchan M.R."/>
            <person name="Cline T.W."/>
        </authorList>
    </citation>
    <scope>FUNCTION</scope>
    <scope>SUBCELLULAR LOCATION</scope>
</reference>
<sequence>MSTSTATTSVITSNELSLSGHAHGHGHAHQLHQHTHSRLGVGVGVGILSDASLSPIQQGSGGHSGGGNTNSSPLAPNGVPLLTTMHRSPDSPQPELATMTNVNVLDLHTDNSKLYDKEAVFIYETPKVVMPADGGGGNNSDEGHAIDARIAAQMGNQAQQQQQQQQQTEHQPLAKIEFDENQIIRVVGPNGEQQQIISREIINGEHHILSRNEAGEHILTRIVSDPSKLMPNDNAVATAMYNQAQKMNNDHGQAVYQTSPLPLDASVLHYSGGNDSNVIKTEADIYEDHKKHAAAAAAAAGGGSIIYTTSDPNGVNVKQLPHLTVPQKLDPDLYQADKHIDLIYNDGSKTVIYSTTDQKSLEIYSGGDIGSLVSDGQVVVQAGLPYATTTGAGGQPVYIVADGALPAGVEEHLQSGKLNGQTTPIDVSGLSQNEIQGFLLGSHPSSSATVSTTGVVSTTTISHHQQQQQQQQQQQQQQQQQHQQQQQHPGDIVSAAGVGSTGSIVSSAAQQQQQQQLISIKREPEDLRKDPKNGNIAGAATANGPGSVITQKILHVDAPTASEADRPSTPSSSINSTENTESDSQSVSGSESGSPGARTTATLEMYATTGGTQIYLQTSHPSTASGAGGGAGPAGAAGGGGVSMQAQSPSPGPYITANDYGMYTASRLPPGPPPTSTTTFIAEPSYYREYFAPDGQGGYVPASTRSLYGDVDVSVSQPGGVVTYEGRFAGSVPPPATTTVLTSVHHHQQQQQQQQQHQQQQQQQQHHQQQQHHSQDGKSNGGATPLYAKAITAAGLTVDLPSPDSGIGTDAITPRDQTNIQQSFDYTELCQPGTLIDANGSIPVSVNSIQQRTAVHGSQNSPTTSLVDTSTNGSTRSRPWHDFGRQNDADKIQIPKIFTNVGFRYHLESPISSSQRREDDRITYINKGQFYGITLEYVHDAEKPIKNTTVKSVIMLMFREEKSPEDEIKAWQFWHSRQHSVKQRILDADTKNSVGLVGCIEEVSHNAIAVYWNPLESSAKINIAVQCLSTDFSSQKGVKGLPLHVQIDTFEDPRDTAVFHRGYCQIKVFCDKGAERKTRDEERRAAKRKMTATGRKKLDELYHPVTDRSEFYGMQDFAKPPVLFSPAEDMEKVGQLGIGAATGMTFNPLSNGNSNSNSHSSLQSFYGHETDSPDLKGASPFLLHGQKVATPTLKFHNHFPPDMQTDKKDHILDQNMLTSTPLTDFGPPMKRGRMTPPTSERVMLYVRQENEEVYTPLHVVPPTTIGLLNAIENKYKISTTSINNIYRTNKKGITAKIDDDMISFYCNEDIFLLEVQQIEDDLYDVTLTELPNQ</sequence>
<name>ELF1_DROME</name>